<evidence type="ECO:0000255" key="1">
    <source>
        <dbReference type="HAMAP-Rule" id="MF_01062"/>
    </source>
</evidence>
<keyword id="KW-0418">Kinase</keyword>
<keyword id="KW-0547">Nucleotide-binding</keyword>
<keyword id="KW-1185">Reference proteome</keyword>
<keyword id="KW-0723">Serine/threonine-protein kinase</keyword>
<keyword id="KW-0808">Transferase</keyword>
<accession>C1DCN2</accession>
<sequence>MPHRRSAYFVSDRTGITAESLGNALLTQFDMLEFKRETIPFIDTADKAMAVAEQIRQRAQSDHFRPLVFVSIVNPFVREAIQVDDCAMVIDFFHAFVGQLENELEQKATLTVGKSHGIISEEKYDTRIEAVNFSLNHDDGVKLKDLAEADVILVGVSRSGKTPTCLYLALQYGIKAANYPLTPEDLDSPTLPKMLLPYRKKIFGLTIEPQRLHHIRNERKPDSRYASIDNCRREVNEAESLFRHHGVPFISTTHKSIEEIASTILHHTGISRRF</sequence>
<feature type="chain" id="PRO_1000149711" description="Putative phosphoenolpyruvate synthase regulatory protein">
    <location>
        <begin position="1"/>
        <end position="274"/>
    </location>
</feature>
<feature type="binding site" evidence="1">
    <location>
        <begin position="155"/>
        <end position="162"/>
    </location>
    <ligand>
        <name>ADP</name>
        <dbReference type="ChEBI" id="CHEBI:456216"/>
    </ligand>
</feature>
<dbReference type="EC" id="2.7.11.33" evidence="1"/>
<dbReference type="EC" id="2.7.4.28" evidence="1"/>
<dbReference type="EMBL" id="CP001154">
    <property type="protein sequence ID" value="ACO75650.1"/>
    <property type="molecule type" value="Genomic_DNA"/>
</dbReference>
<dbReference type="RefSeq" id="WP_012698114.1">
    <property type="nucleotide sequence ID" value="NC_012559.1"/>
</dbReference>
<dbReference type="SMR" id="C1DCN2"/>
<dbReference type="STRING" id="557598.LHK_02669"/>
<dbReference type="KEGG" id="lhk:LHK_02669"/>
<dbReference type="eggNOG" id="COG1806">
    <property type="taxonomic scope" value="Bacteria"/>
</dbReference>
<dbReference type="HOGENOM" id="CLU_046206_1_0_4"/>
<dbReference type="Proteomes" id="UP000002010">
    <property type="component" value="Chromosome"/>
</dbReference>
<dbReference type="GO" id="GO:0043531">
    <property type="term" value="F:ADP binding"/>
    <property type="evidence" value="ECO:0007669"/>
    <property type="project" value="UniProtKB-UniRule"/>
</dbReference>
<dbReference type="GO" id="GO:0005524">
    <property type="term" value="F:ATP binding"/>
    <property type="evidence" value="ECO:0007669"/>
    <property type="project" value="InterPro"/>
</dbReference>
<dbReference type="GO" id="GO:0016776">
    <property type="term" value="F:phosphotransferase activity, phosphate group as acceptor"/>
    <property type="evidence" value="ECO:0007669"/>
    <property type="project" value="UniProtKB-UniRule"/>
</dbReference>
<dbReference type="GO" id="GO:0004674">
    <property type="term" value="F:protein serine/threonine kinase activity"/>
    <property type="evidence" value="ECO:0007669"/>
    <property type="project" value="UniProtKB-UniRule"/>
</dbReference>
<dbReference type="HAMAP" id="MF_01062">
    <property type="entry name" value="PSRP"/>
    <property type="match status" value="1"/>
</dbReference>
<dbReference type="InterPro" id="IPR005177">
    <property type="entry name" value="Kinase-pyrophosphorylase"/>
</dbReference>
<dbReference type="InterPro" id="IPR026530">
    <property type="entry name" value="PSRP"/>
</dbReference>
<dbReference type="NCBIfam" id="NF003742">
    <property type="entry name" value="PRK05339.1"/>
    <property type="match status" value="1"/>
</dbReference>
<dbReference type="PANTHER" id="PTHR31756">
    <property type="entry name" value="PYRUVATE, PHOSPHATE DIKINASE REGULATORY PROTEIN 1, CHLOROPLASTIC"/>
    <property type="match status" value="1"/>
</dbReference>
<dbReference type="PANTHER" id="PTHR31756:SF3">
    <property type="entry name" value="PYRUVATE, PHOSPHATE DIKINASE REGULATORY PROTEIN 1, CHLOROPLASTIC"/>
    <property type="match status" value="1"/>
</dbReference>
<dbReference type="Pfam" id="PF03618">
    <property type="entry name" value="Kinase-PPPase"/>
    <property type="match status" value="1"/>
</dbReference>
<protein>
    <recommendedName>
        <fullName evidence="1">Putative phosphoenolpyruvate synthase regulatory protein</fullName>
        <shortName evidence="1">PEP synthase regulatory protein</shortName>
        <shortName evidence="1">PSRP</shortName>
        <ecNumber evidence="1">2.7.11.33</ecNumber>
        <ecNumber evidence="1">2.7.4.28</ecNumber>
    </recommendedName>
    <alternativeName>
        <fullName evidence="1">Pyruvate, water dikinase regulatory protein</fullName>
    </alternativeName>
</protein>
<name>PSRP_LARHH</name>
<proteinExistence type="inferred from homology"/>
<organism>
    <name type="scientific">Laribacter hongkongensis (strain HLHK9)</name>
    <dbReference type="NCBI Taxonomy" id="557598"/>
    <lineage>
        <taxon>Bacteria</taxon>
        <taxon>Pseudomonadati</taxon>
        <taxon>Pseudomonadota</taxon>
        <taxon>Betaproteobacteria</taxon>
        <taxon>Neisseriales</taxon>
        <taxon>Aquaspirillaceae</taxon>
        <taxon>Laribacter</taxon>
    </lineage>
</organism>
<comment type="function">
    <text evidence="1">Bifunctional serine/threonine kinase and phosphorylase involved in the regulation of the phosphoenolpyruvate synthase (PEPS) by catalyzing its phosphorylation/dephosphorylation.</text>
</comment>
<comment type="catalytic activity">
    <reaction evidence="1">
        <text>[pyruvate, water dikinase] + ADP = [pyruvate, water dikinase]-phosphate + AMP + H(+)</text>
        <dbReference type="Rhea" id="RHEA:46020"/>
        <dbReference type="Rhea" id="RHEA-COMP:11425"/>
        <dbReference type="Rhea" id="RHEA-COMP:11426"/>
        <dbReference type="ChEBI" id="CHEBI:15378"/>
        <dbReference type="ChEBI" id="CHEBI:43176"/>
        <dbReference type="ChEBI" id="CHEBI:68546"/>
        <dbReference type="ChEBI" id="CHEBI:456215"/>
        <dbReference type="ChEBI" id="CHEBI:456216"/>
        <dbReference type="EC" id="2.7.11.33"/>
    </reaction>
</comment>
<comment type="catalytic activity">
    <reaction evidence="1">
        <text>[pyruvate, water dikinase]-phosphate + phosphate + H(+) = [pyruvate, water dikinase] + diphosphate</text>
        <dbReference type="Rhea" id="RHEA:48580"/>
        <dbReference type="Rhea" id="RHEA-COMP:11425"/>
        <dbReference type="Rhea" id="RHEA-COMP:11426"/>
        <dbReference type="ChEBI" id="CHEBI:15378"/>
        <dbReference type="ChEBI" id="CHEBI:33019"/>
        <dbReference type="ChEBI" id="CHEBI:43176"/>
        <dbReference type="ChEBI" id="CHEBI:43474"/>
        <dbReference type="ChEBI" id="CHEBI:68546"/>
        <dbReference type="EC" id="2.7.4.28"/>
    </reaction>
</comment>
<comment type="similarity">
    <text evidence="1">Belongs to the pyruvate, phosphate/water dikinase regulatory protein family. PSRP subfamily.</text>
</comment>
<gene>
    <name type="ordered locus">LHK_02669</name>
</gene>
<reference key="1">
    <citation type="journal article" date="2009" name="PLoS Genet.">
        <title>The complete genome and proteome of Laribacter hongkongensis reveal potential mechanisms for adaptations to different temperatures and habitats.</title>
        <authorList>
            <person name="Woo P.C.Y."/>
            <person name="Lau S.K.P."/>
            <person name="Tse H."/>
            <person name="Teng J.L.L."/>
            <person name="Curreem S.O."/>
            <person name="Tsang A.K.L."/>
            <person name="Fan R.Y.Y."/>
            <person name="Wong G.K.M."/>
            <person name="Huang Y."/>
            <person name="Loman N.J."/>
            <person name="Snyder L.A.S."/>
            <person name="Cai J.J."/>
            <person name="Huang J.-D."/>
            <person name="Mak W."/>
            <person name="Pallen M.J."/>
            <person name="Lok S."/>
            <person name="Yuen K.-Y."/>
        </authorList>
    </citation>
    <scope>NUCLEOTIDE SEQUENCE [LARGE SCALE GENOMIC DNA]</scope>
    <source>
        <strain>HLHK9</strain>
    </source>
</reference>